<gene>
    <name type="primary">HEH2</name>
    <name type="ordered locus">YDR458C</name>
    <name type="ORF">D8035.2</name>
</gene>
<feature type="chain" id="PRO_0000202596" description="Inner nuclear membrane protein HEH2">
    <location>
        <begin position="1"/>
        <end position="663"/>
    </location>
</feature>
<feature type="transmembrane region" description="Helical" evidence="1">
    <location>
        <begin position="317"/>
        <end position="337"/>
    </location>
</feature>
<feature type="region of interest" description="Disordered" evidence="2">
    <location>
        <begin position="46"/>
        <end position="188"/>
    </location>
</feature>
<feature type="region of interest" description="Disordered" evidence="2">
    <location>
        <begin position="267"/>
        <end position="289"/>
    </location>
</feature>
<feature type="short sequence motif" description="Nuclear localization signal" evidence="1">
    <location>
        <begin position="124"/>
        <end position="137"/>
    </location>
</feature>
<feature type="compositionally biased region" description="Polar residues" evidence="2">
    <location>
        <begin position="47"/>
        <end position="62"/>
    </location>
</feature>
<feature type="compositionally biased region" description="Basic and acidic residues" evidence="2">
    <location>
        <begin position="91"/>
        <end position="123"/>
    </location>
</feature>
<feature type="compositionally biased region" description="Basic residues" evidence="2">
    <location>
        <begin position="124"/>
        <end position="134"/>
    </location>
</feature>
<feature type="compositionally biased region" description="Basic and acidic residues" evidence="2">
    <location>
        <begin position="164"/>
        <end position="183"/>
    </location>
</feature>
<feature type="modified residue" description="Phosphoserine" evidence="6">
    <location>
        <position position="123"/>
    </location>
</feature>
<feature type="mutagenesis site" description="No interaction with SRP1; when associated with missing 309-I--E-663." evidence="5">
    <location>
        <begin position="1"/>
        <end position="133"/>
    </location>
</feature>
<feature type="mutagenesis site" description="Interaction with SRP1; when associated with missing 309-I--E-663." evidence="5">
    <location>
        <begin position="1"/>
        <end position="52"/>
    </location>
</feature>
<feature type="mutagenesis site" description="No interaction with SRP1; when associated with missing 309-I--E-663. Mislocalized to the endoplasmic reticulum." evidence="5">
    <location>
        <begin position="124"/>
        <end position="137"/>
    </location>
</feature>
<feature type="mutagenesis site" description="Mislocalized to the endoplasmic reticulum." evidence="5">
    <original>K</original>
    <variation>T</variation>
    <location>
        <position position="126"/>
    </location>
</feature>
<feature type="mutagenesis site" description="Interaction with SRP1." evidence="5">
    <location>
        <begin position="309"/>
        <end position="663"/>
    </location>
</feature>
<feature type="turn" evidence="7">
    <location>
        <begin position="105"/>
        <end position="107"/>
    </location>
</feature>
<feature type="helix" evidence="7">
    <location>
        <begin position="113"/>
        <end position="118"/>
    </location>
</feature>
<comment type="subunit">
    <text evidence="5">Interacts with SRP1.</text>
</comment>
<comment type="interaction">
    <interactant intactId="EBI-22131">
        <id>Q03281</id>
    </interactant>
    <interactant intactId="EBI-17554">
        <id>P39929</id>
        <label>SNF7</label>
    </interactant>
    <organismsDiffer>false</organismsDiffer>
    <experiments>3</experiments>
</comment>
<comment type="interaction">
    <interactant intactId="EBI-22131">
        <id>Q03281</id>
    </interactant>
    <interactant intactId="EBI-1797">
        <id>Q02821</id>
        <label>SRP1</label>
    </interactant>
    <organismsDiffer>false</organismsDiffer>
    <experiments>7</experiments>
</comment>
<comment type="subcellular location">
    <subcellularLocation>
        <location evidence="3 5">Nucleus inner membrane</location>
        <topology evidence="3 5">Single-pass membrane protein</topology>
    </subcellularLocation>
    <text>Targeting to the inner nuclear membrane requires the SRP1 and KAP95 karyopherins and the Ran cycle.</text>
</comment>
<comment type="miscellaneous">
    <text evidence="4">Present with 1250 molecules/cell in log phase SD medium.</text>
</comment>
<dbReference type="EMBL" id="U33050">
    <property type="protein sequence ID" value="AAB64934.1"/>
    <property type="molecule type" value="Genomic_DNA"/>
</dbReference>
<dbReference type="EMBL" id="BK006938">
    <property type="protein sequence ID" value="DAA12292.1"/>
    <property type="molecule type" value="Genomic_DNA"/>
</dbReference>
<dbReference type="PIR" id="S69626">
    <property type="entry name" value="S69626"/>
</dbReference>
<dbReference type="RefSeq" id="NP_010746.1">
    <property type="nucleotide sequence ID" value="NM_001180766.1"/>
</dbReference>
<dbReference type="PDB" id="4PVZ">
    <property type="method" value="X-ray"/>
    <property type="resolution" value="2.50 A"/>
    <property type="chains" value="C/D=100-137"/>
</dbReference>
<dbReference type="PDBsum" id="4PVZ"/>
<dbReference type="SASBDB" id="Q03281"/>
<dbReference type="SMR" id="Q03281"/>
<dbReference type="BioGRID" id="32512">
    <property type="interactions" value="72"/>
</dbReference>
<dbReference type="DIP" id="DIP-7259N"/>
<dbReference type="FunCoup" id="Q03281">
    <property type="interactions" value="54"/>
</dbReference>
<dbReference type="IntAct" id="Q03281">
    <property type="interactions" value="6"/>
</dbReference>
<dbReference type="STRING" id="4932.YDR458C"/>
<dbReference type="iPTMnet" id="Q03281"/>
<dbReference type="PaxDb" id="4932-YDR458C"/>
<dbReference type="PeptideAtlas" id="Q03281"/>
<dbReference type="EnsemblFungi" id="YDR458C_mRNA">
    <property type="protein sequence ID" value="YDR458C"/>
    <property type="gene ID" value="YDR458C"/>
</dbReference>
<dbReference type="GeneID" id="852069"/>
<dbReference type="KEGG" id="sce:YDR458C"/>
<dbReference type="AGR" id="SGD:S000002866"/>
<dbReference type="SGD" id="S000002866">
    <property type="gene designation" value="HEH2"/>
</dbReference>
<dbReference type="VEuPathDB" id="FungiDB:YDR458C"/>
<dbReference type="eggNOG" id="ENOG502QVG5">
    <property type="taxonomic scope" value="Eukaryota"/>
</dbReference>
<dbReference type="GeneTree" id="ENSGT00940000171142"/>
<dbReference type="HOGENOM" id="CLU_010838_2_0_1"/>
<dbReference type="InParanoid" id="Q03281"/>
<dbReference type="OMA" id="KWECGEL"/>
<dbReference type="OrthoDB" id="2503928at2759"/>
<dbReference type="BioCyc" id="YEAST:G3O-29986-MONOMER"/>
<dbReference type="BioGRID-ORCS" id="852069">
    <property type="hits" value="2 hits in 10 CRISPR screens"/>
</dbReference>
<dbReference type="PRO" id="PR:Q03281"/>
<dbReference type="Proteomes" id="UP000002311">
    <property type="component" value="Chromosome IV"/>
</dbReference>
<dbReference type="RNAct" id="Q03281">
    <property type="molecule type" value="protein"/>
</dbReference>
<dbReference type="GO" id="GO:0005635">
    <property type="term" value="C:nuclear envelope"/>
    <property type="evidence" value="ECO:0000314"/>
    <property type="project" value="SGD"/>
</dbReference>
<dbReference type="GO" id="GO:0005637">
    <property type="term" value="C:nuclear inner membrane"/>
    <property type="evidence" value="ECO:0000318"/>
    <property type="project" value="GO_Central"/>
</dbReference>
<dbReference type="GO" id="GO:0034399">
    <property type="term" value="C:nuclear periphery"/>
    <property type="evidence" value="ECO:0007005"/>
    <property type="project" value="SGD"/>
</dbReference>
<dbReference type="GO" id="GO:0003682">
    <property type="term" value="F:chromatin binding"/>
    <property type="evidence" value="ECO:0007669"/>
    <property type="project" value="InterPro"/>
</dbReference>
<dbReference type="GO" id="GO:0071763">
    <property type="term" value="P:nuclear membrane organization"/>
    <property type="evidence" value="ECO:0000318"/>
    <property type="project" value="GO_Central"/>
</dbReference>
<dbReference type="CDD" id="cd12935">
    <property type="entry name" value="LEM_like"/>
    <property type="match status" value="1"/>
</dbReference>
<dbReference type="DisProt" id="DP02124"/>
<dbReference type="Gene3D" id="1.10.720.40">
    <property type="match status" value="1"/>
</dbReference>
<dbReference type="Gene3D" id="1.10.10.1180">
    <property type="entry name" value="MAN1, winged-helix domain"/>
    <property type="match status" value="1"/>
</dbReference>
<dbReference type="IDEAL" id="IID50288"/>
<dbReference type="InterPro" id="IPR025856">
    <property type="entry name" value="HeH/LEM_domain"/>
</dbReference>
<dbReference type="InterPro" id="IPR044780">
    <property type="entry name" value="Heh2/Src1"/>
</dbReference>
<dbReference type="InterPro" id="IPR011015">
    <property type="entry name" value="LEM/LEM-like_dom_sf"/>
</dbReference>
<dbReference type="InterPro" id="IPR018996">
    <property type="entry name" value="Man1/Src1-like_C"/>
</dbReference>
<dbReference type="InterPro" id="IPR041885">
    <property type="entry name" value="MAN1_winged_helix_dom"/>
</dbReference>
<dbReference type="PANTHER" id="PTHR47808">
    <property type="entry name" value="INNER NUCLEAR MEMBRANE PROTEIN HEH2-RELATED"/>
    <property type="match status" value="1"/>
</dbReference>
<dbReference type="PANTHER" id="PTHR47808:SF2">
    <property type="entry name" value="LEM DOMAIN-CONTAINING PROTEIN 2"/>
    <property type="match status" value="1"/>
</dbReference>
<dbReference type="Pfam" id="PF12949">
    <property type="entry name" value="HeH"/>
    <property type="match status" value="1"/>
</dbReference>
<dbReference type="Pfam" id="PF09402">
    <property type="entry name" value="MSC"/>
    <property type="match status" value="1"/>
</dbReference>
<name>HEH2_YEAST</name>
<sequence length="663" mass="76377">MDHRNLDPKTLKVSQLRRVLVENDVAFPANARKPVLVKLFEEKVRQRLQSSPEASKVRTSIQKVVKSGAKNADRKKTLKSKKLESSSSESKTVKDENVETNKRKREQISTDNEAKMQIQEEKSPKKKRKKRSSKANKPPESPPQSKSDGKATSADLTSELETVEELHKKDSSDDKPRVKELPKPELPNLKVSNEFLAQLNKELASAATENYDHSIKSTDLSSIRIETEEPVGPSTGAETRNESEVMENINLEVQPEVKEAKEELTKISETFDNQDEEDTSRLSSKKNIRSPKGRTRHFIANKTKRGIDIMKPFIAHLFIWLWNGAIFLSIICPILFGLWYREQRIQVGYCGHEKPLKSLAISAFPQTERVDSVLQAYRPNCLECPEHGICSSFMNVECEPGYEPKSSILETYGIIPFPKYCAKDESKEKEVDELVWKVNEYLKKKNAQHECGEGENLFESGETETKLYDIFSHSRPSWESQREFNDHWKNVLEILKKKDDIIWLPLDFETNGKREKSKSNNTNYIYRSTSKKWVTLQCHLEGDIQEYITKYGGSLFITLGVLFLIKKIQSTLDNYVQGEQIIEKLVKEAIDKLKDVKKNKGEEPFLTTVQLRATLLSDIPNIKEQNNLWAQTKEKIMKEQSENIELYLLEENGEIMTCWEWKE</sequence>
<reference key="1">
    <citation type="journal article" date="1997" name="Nature">
        <title>The nucleotide sequence of Saccharomyces cerevisiae chromosome IV.</title>
        <authorList>
            <person name="Jacq C."/>
            <person name="Alt-Moerbe J."/>
            <person name="Andre B."/>
            <person name="Arnold W."/>
            <person name="Bahr A."/>
            <person name="Ballesta J.P.G."/>
            <person name="Bargues M."/>
            <person name="Baron L."/>
            <person name="Becker A."/>
            <person name="Biteau N."/>
            <person name="Bloecker H."/>
            <person name="Blugeon C."/>
            <person name="Boskovic J."/>
            <person name="Brandt P."/>
            <person name="Brueckner M."/>
            <person name="Buitrago M.J."/>
            <person name="Coster F."/>
            <person name="Delaveau T."/>
            <person name="del Rey F."/>
            <person name="Dujon B."/>
            <person name="Eide L.G."/>
            <person name="Garcia-Cantalejo J.M."/>
            <person name="Goffeau A."/>
            <person name="Gomez-Peris A."/>
            <person name="Granotier C."/>
            <person name="Hanemann V."/>
            <person name="Hankeln T."/>
            <person name="Hoheisel J.D."/>
            <person name="Jaeger W."/>
            <person name="Jimenez A."/>
            <person name="Jonniaux J.-L."/>
            <person name="Kraemer C."/>
            <person name="Kuester H."/>
            <person name="Laamanen P."/>
            <person name="Legros Y."/>
            <person name="Louis E.J."/>
            <person name="Moeller-Rieker S."/>
            <person name="Monnet A."/>
            <person name="Moro M."/>
            <person name="Mueller-Auer S."/>
            <person name="Nussbaumer B."/>
            <person name="Paricio N."/>
            <person name="Paulin L."/>
            <person name="Perea J."/>
            <person name="Perez-Alonso M."/>
            <person name="Perez-Ortin J.E."/>
            <person name="Pohl T.M."/>
            <person name="Prydz H."/>
            <person name="Purnelle B."/>
            <person name="Rasmussen S.W."/>
            <person name="Remacha M.A."/>
            <person name="Revuelta J.L."/>
            <person name="Rieger M."/>
            <person name="Salom D."/>
            <person name="Saluz H.P."/>
            <person name="Saiz J.E."/>
            <person name="Saren A.-M."/>
            <person name="Schaefer M."/>
            <person name="Scharfe M."/>
            <person name="Schmidt E.R."/>
            <person name="Schneider C."/>
            <person name="Scholler P."/>
            <person name="Schwarz S."/>
            <person name="Soler-Mira A."/>
            <person name="Urrestarazu L.A."/>
            <person name="Verhasselt P."/>
            <person name="Vissers S."/>
            <person name="Voet M."/>
            <person name="Volckaert G."/>
            <person name="Wagner G."/>
            <person name="Wambutt R."/>
            <person name="Wedler E."/>
            <person name="Wedler H."/>
            <person name="Woelfl S."/>
            <person name="Harris D.E."/>
            <person name="Bowman S."/>
            <person name="Brown D."/>
            <person name="Churcher C.M."/>
            <person name="Connor R."/>
            <person name="Dedman K."/>
            <person name="Gentles S."/>
            <person name="Hamlin N."/>
            <person name="Hunt S."/>
            <person name="Jones L."/>
            <person name="McDonald S."/>
            <person name="Murphy L.D."/>
            <person name="Niblett D."/>
            <person name="Odell C."/>
            <person name="Oliver K."/>
            <person name="Rajandream M.A."/>
            <person name="Richards C."/>
            <person name="Shore L."/>
            <person name="Walsh S.V."/>
            <person name="Barrell B.G."/>
            <person name="Dietrich F.S."/>
            <person name="Mulligan J.T."/>
            <person name="Allen E."/>
            <person name="Araujo R."/>
            <person name="Aviles E."/>
            <person name="Berno A."/>
            <person name="Carpenter J."/>
            <person name="Chen E."/>
            <person name="Cherry J.M."/>
            <person name="Chung E."/>
            <person name="Duncan M."/>
            <person name="Hunicke-Smith S."/>
            <person name="Hyman R.W."/>
            <person name="Komp C."/>
            <person name="Lashkari D."/>
            <person name="Lew H."/>
            <person name="Lin D."/>
            <person name="Mosedale D."/>
            <person name="Nakahara K."/>
            <person name="Namath A."/>
            <person name="Oefner P."/>
            <person name="Oh C."/>
            <person name="Petel F.X."/>
            <person name="Roberts D."/>
            <person name="Schramm S."/>
            <person name="Schroeder M."/>
            <person name="Shogren T."/>
            <person name="Shroff N."/>
            <person name="Winant A."/>
            <person name="Yelton M.A."/>
            <person name="Botstein D."/>
            <person name="Davis R.W."/>
            <person name="Johnston M."/>
            <person name="Andrews S."/>
            <person name="Brinkman R."/>
            <person name="Cooper J."/>
            <person name="Ding H."/>
            <person name="Du Z."/>
            <person name="Favello A."/>
            <person name="Fulton L."/>
            <person name="Gattung S."/>
            <person name="Greco T."/>
            <person name="Hallsworth K."/>
            <person name="Hawkins J."/>
            <person name="Hillier L.W."/>
            <person name="Jier M."/>
            <person name="Johnson D."/>
            <person name="Johnston L."/>
            <person name="Kirsten J."/>
            <person name="Kucaba T."/>
            <person name="Langston Y."/>
            <person name="Latreille P."/>
            <person name="Le T."/>
            <person name="Mardis E."/>
            <person name="Menezes S."/>
            <person name="Miller N."/>
            <person name="Nhan M."/>
            <person name="Pauley A."/>
            <person name="Peluso D."/>
            <person name="Rifkin L."/>
            <person name="Riles L."/>
            <person name="Taich A."/>
            <person name="Trevaskis E."/>
            <person name="Vignati D."/>
            <person name="Wilcox L."/>
            <person name="Wohldman P."/>
            <person name="Vaudin M."/>
            <person name="Wilson R."/>
            <person name="Waterston R."/>
            <person name="Albermann K."/>
            <person name="Hani J."/>
            <person name="Heumann K."/>
            <person name="Kleine K."/>
            <person name="Mewes H.-W."/>
            <person name="Zollner A."/>
            <person name="Zaccaria P."/>
        </authorList>
    </citation>
    <scope>NUCLEOTIDE SEQUENCE [LARGE SCALE GENOMIC DNA]</scope>
    <source>
        <strain>ATCC 204508 / S288c</strain>
    </source>
</reference>
<reference key="2">
    <citation type="journal article" date="2014" name="G3 (Bethesda)">
        <title>The reference genome sequence of Saccharomyces cerevisiae: Then and now.</title>
        <authorList>
            <person name="Engel S.R."/>
            <person name="Dietrich F.S."/>
            <person name="Fisk D.G."/>
            <person name="Binkley G."/>
            <person name="Balakrishnan R."/>
            <person name="Costanzo M.C."/>
            <person name="Dwight S.S."/>
            <person name="Hitz B.C."/>
            <person name="Karra K."/>
            <person name="Nash R.S."/>
            <person name="Weng S."/>
            <person name="Wong E.D."/>
            <person name="Lloyd P."/>
            <person name="Skrzypek M.S."/>
            <person name="Miyasato S.R."/>
            <person name="Simison M."/>
            <person name="Cherry J.M."/>
        </authorList>
    </citation>
    <scope>GENOME REANNOTATION</scope>
    <source>
        <strain>ATCC 204508 / S288c</strain>
    </source>
</reference>
<reference key="3">
    <citation type="journal article" date="2003" name="Nature">
        <title>Global analysis of protein localization in budding yeast.</title>
        <authorList>
            <person name="Huh W.-K."/>
            <person name="Falvo J.V."/>
            <person name="Gerke L.C."/>
            <person name="Carroll A.S."/>
            <person name="Howson R.W."/>
            <person name="Weissman J.S."/>
            <person name="O'Shea E.K."/>
        </authorList>
    </citation>
    <scope>SUBCELLULAR LOCATION [LARGE SCALE ANALYSIS]</scope>
</reference>
<reference key="4">
    <citation type="journal article" date="2003" name="Nature">
        <title>Global analysis of protein expression in yeast.</title>
        <authorList>
            <person name="Ghaemmaghami S."/>
            <person name="Huh W.-K."/>
            <person name="Bower K."/>
            <person name="Howson R.W."/>
            <person name="Belle A."/>
            <person name="Dephoure N."/>
            <person name="O'Shea E.K."/>
            <person name="Weissman J.S."/>
        </authorList>
    </citation>
    <scope>LEVEL OF PROTEIN EXPRESSION [LARGE SCALE ANALYSIS]</scope>
</reference>
<reference key="5">
    <citation type="journal article" date="2006" name="Nature">
        <title>Karyopherin-mediated import of integral inner nuclear membrane proteins.</title>
        <authorList>
            <person name="King M.C."/>
            <person name="Lusk C.P."/>
            <person name="Blobel G."/>
        </authorList>
    </citation>
    <scope>GENE NAME</scope>
    <scope>SUBCELLULAR LOCATION</scope>
    <scope>INTERACTION WITH SRP1</scope>
    <scope>MUTAGENESIS OF 1-MET--PRO-52; 1-MET--SER-133; 124-PRO--LYS-137; LYS-126 AND 309-ILE--GLU-663</scope>
</reference>
<reference key="6">
    <citation type="journal article" date="2009" name="Science">
        <title>Global analysis of Cdk1 substrate phosphorylation sites provides insights into evolution.</title>
        <authorList>
            <person name="Holt L.J."/>
            <person name="Tuch B.B."/>
            <person name="Villen J."/>
            <person name="Johnson A.D."/>
            <person name="Gygi S.P."/>
            <person name="Morgan D.O."/>
        </authorList>
    </citation>
    <scope>PHOSPHORYLATION [LARGE SCALE ANALYSIS] AT SER-123</scope>
    <scope>IDENTIFICATION BY MASS SPECTROMETRY [LARGE SCALE ANALYSIS]</scope>
</reference>
<organism>
    <name type="scientific">Saccharomyces cerevisiae (strain ATCC 204508 / S288c)</name>
    <name type="common">Baker's yeast</name>
    <dbReference type="NCBI Taxonomy" id="559292"/>
    <lineage>
        <taxon>Eukaryota</taxon>
        <taxon>Fungi</taxon>
        <taxon>Dikarya</taxon>
        <taxon>Ascomycota</taxon>
        <taxon>Saccharomycotina</taxon>
        <taxon>Saccharomycetes</taxon>
        <taxon>Saccharomycetales</taxon>
        <taxon>Saccharomycetaceae</taxon>
        <taxon>Saccharomyces</taxon>
    </lineage>
</organism>
<keyword id="KW-0002">3D-structure</keyword>
<keyword id="KW-0472">Membrane</keyword>
<keyword id="KW-0539">Nucleus</keyword>
<keyword id="KW-0597">Phosphoprotein</keyword>
<keyword id="KW-1185">Reference proteome</keyword>
<keyword id="KW-0812">Transmembrane</keyword>
<keyword id="KW-1133">Transmembrane helix</keyword>
<evidence type="ECO:0000255" key="1"/>
<evidence type="ECO:0000256" key="2">
    <source>
        <dbReference type="SAM" id="MobiDB-lite"/>
    </source>
</evidence>
<evidence type="ECO:0000269" key="3">
    <source>
    </source>
</evidence>
<evidence type="ECO:0000269" key="4">
    <source>
    </source>
</evidence>
<evidence type="ECO:0000269" key="5">
    <source>
    </source>
</evidence>
<evidence type="ECO:0007744" key="6">
    <source>
    </source>
</evidence>
<evidence type="ECO:0007829" key="7">
    <source>
        <dbReference type="PDB" id="4PVZ"/>
    </source>
</evidence>
<protein>
    <recommendedName>
        <fullName>Inner nuclear membrane protein HEH2</fullName>
    </recommendedName>
    <alternativeName>
        <fullName>Helix-extension-helix domain-containing protein 2</fullName>
    </alternativeName>
</protein>
<proteinExistence type="evidence at protein level"/>
<accession>Q03281</accession>
<accession>D6VT82</accession>